<protein>
    <recommendedName>
        <fullName evidence="1">S-adenosylmethionine:tRNA ribosyltransferase-isomerase</fullName>
        <ecNumber evidence="1">2.4.99.17</ecNumber>
    </recommendedName>
    <alternativeName>
        <fullName evidence="1">Queuosine biosynthesis protein QueA</fullName>
    </alternativeName>
</protein>
<reference key="1">
    <citation type="journal article" date="2010" name="Genome Biol. Evol.">
        <title>Continuing evolution of Burkholderia mallei through genome reduction and large-scale rearrangements.</title>
        <authorList>
            <person name="Losada L."/>
            <person name="Ronning C.M."/>
            <person name="DeShazer D."/>
            <person name="Woods D."/>
            <person name="Fedorova N."/>
            <person name="Kim H.S."/>
            <person name="Shabalina S.A."/>
            <person name="Pearson T.R."/>
            <person name="Brinkac L."/>
            <person name="Tan P."/>
            <person name="Nandi T."/>
            <person name="Crabtree J."/>
            <person name="Badger J."/>
            <person name="Beckstrom-Sternberg S."/>
            <person name="Saqib M."/>
            <person name="Schutzer S.E."/>
            <person name="Keim P."/>
            <person name="Nierman W.C."/>
        </authorList>
    </citation>
    <scope>NUCLEOTIDE SEQUENCE [LARGE SCALE GENOMIC DNA]</scope>
    <source>
        <strain>1710b</strain>
    </source>
</reference>
<dbReference type="EC" id="2.4.99.17" evidence="1"/>
<dbReference type="EMBL" id="CP000124">
    <property type="protein sequence ID" value="ABA49758.1"/>
    <property type="status" value="ALT_INIT"/>
    <property type="molecule type" value="Genomic_DNA"/>
</dbReference>
<dbReference type="RefSeq" id="WP_004527707.1">
    <property type="nucleotide sequence ID" value="NC_007434.1"/>
</dbReference>
<dbReference type="SMR" id="Q3JNW2"/>
<dbReference type="EnsemblBacteria" id="ABA49758">
    <property type="protein sequence ID" value="ABA49758"/>
    <property type="gene ID" value="BURPS1710b_3369"/>
</dbReference>
<dbReference type="GeneID" id="93061459"/>
<dbReference type="KEGG" id="bpm:BURPS1710b_3369"/>
<dbReference type="HOGENOM" id="CLU_039110_1_0_4"/>
<dbReference type="UniPathway" id="UPA00392"/>
<dbReference type="Proteomes" id="UP000002700">
    <property type="component" value="Chromosome I"/>
</dbReference>
<dbReference type="GO" id="GO:0005737">
    <property type="term" value="C:cytoplasm"/>
    <property type="evidence" value="ECO:0007669"/>
    <property type="project" value="UniProtKB-SubCell"/>
</dbReference>
<dbReference type="GO" id="GO:0051075">
    <property type="term" value="F:S-adenosylmethionine:tRNA ribosyltransferase-isomerase activity"/>
    <property type="evidence" value="ECO:0007669"/>
    <property type="project" value="UniProtKB-EC"/>
</dbReference>
<dbReference type="GO" id="GO:0008616">
    <property type="term" value="P:queuosine biosynthetic process"/>
    <property type="evidence" value="ECO:0007669"/>
    <property type="project" value="UniProtKB-UniRule"/>
</dbReference>
<dbReference type="GO" id="GO:0002099">
    <property type="term" value="P:tRNA wobble guanine modification"/>
    <property type="evidence" value="ECO:0007669"/>
    <property type="project" value="TreeGrafter"/>
</dbReference>
<dbReference type="FunFam" id="3.40.1780.10:FF:000001">
    <property type="entry name" value="S-adenosylmethionine:tRNA ribosyltransferase-isomerase"/>
    <property type="match status" value="1"/>
</dbReference>
<dbReference type="Gene3D" id="2.40.10.240">
    <property type="entry name" value="QueA-like"/>
    <property type="match status" value="1"/>
</dbReference>
<dbReference type="Gene3D" id="3.40.1780.10">
    <property type="entry name" value="QueA-like"/>
    <property type="match status" value="1"/>
</dbReference>
<dbReference type="HAMAP" id="MF_00113">
    <property type="entry name" value="QueA"/>
    <property type="match status" value="1"/>
</dbReference>
<dbReference type="InterPro" id="IPR003699">
    <property type="entry name" value="QueA"/>
</dbReference>
<dbReference type="InterPro" id="IPR042118">
    <property type="entry name" value="QueA_dom1"/>
</dbReference>
<dbReference type="InterPro" id="IPR042119">
    <property type="entry name" value="QueA_dom2"/>
</dbReference>
<dbReference type="InterPro" id="IPR036100">
    <property type="entry name" value="QueA_sf"/>
</dbReference>
<dbReference type="NCBIfam" id="NF001140">
    <property type="entry name" value="PRK00147.1"/>
    <property type="match status" value="1"/>
</dbReference>
<dbReference type="NCBIfam" id="TIGR00113">
    <property type="entry name" value="queA"/>
    <property type="match status" value="1"/>
</dbReference>
<dbReference type="PANTHER" id="PTHR30307">
    <property type="entry name" value="S-ADENOSYLMETHIONINE:TRNA RIBOSYLTRANSFERASE-ISOMERASE"/>
    <property type="match status" value="1"/>
</dbReference>
<dbReference type="PANTHER" id="PTHR30307:SF0">
    <property type="entry name" value="S-ADENOSYLMETHIONINE:TRNA RIBOSYLTRANSFERASE-ISOMERASE"/>
    <property type="match status" value="1"/>
</dbReference>
<dbReference type="Pfam" id="PF02547">
    <property type="entry name" value="Queuosine_synth"/>
    <property type="match status" value="1"/>
</dbReference>
<dbReference type="SUPFAM" id="SSF111337">
    <property type="entry name" value="QueA-like"/>
    <property type="match status" value="1"/>
</dbReference>
<organism>
    <name type="scientific">Burkholderia pseudomallei (strain 1710b)</name>
    <dbReference type="NCBI Taxonomy" id="320372"/>
    <lineage>
        <taxon>Bacteria</taxon>
        <taxon>Pseudomonadati</taxon>
        <taxon>Pseudomonadota</taxon>
        <taxon>Betaproteobacteria</taxon>
        <taxon>Burkholderiales</taxon>
        <taxon>Burkholderiaceae</taxon>
        <taxon>Burkholderia</taxon>
        <taxon>pseudomallei group</taxon>
    </lineage>
</organism>
<proteinExistence type="inferred from homology"/>
<gene>
    <name evidence="1" type="primary">queA</name>
    <name type="ordered locus">BURPS1710b_3369</name>
</gene>
<name>QUEA_BURP1</name>
<sequence length="360" mass="39123">MLTLSDFDFDLPPELIAQTALPERSASRLLEVDNTNPSAPPRLVDRRFAELPACVAPGDLLVFNDTKVLKARFFGRKASGGKIEVLIERVTGERTALAQIRASKSPPPGTTLTLADAFDVTVGERVEPFFTLHFPDDCLVLIERHGRLPLPPYIEHAPDAADETRYQTVFAANPGAVAAPTAGLHFDDAVLAALEARGVERATLTLHVGAGTFQPVRVENLAEHRMHSESYELTDALVEKIAATRARGGRVIAVGTTSMRALEAAARDAQAAGRPLAATRAETDIFITPGYRFRVVDRLVTNFHLPKSTLLMLVSAFAGIETIRAAYRHAIDARYRFFSYGDAMLLTRRDDAAEATHGGA</sequence>
<feature type="chain" id="PRO_0000231325" description="S-adenosylmethionine:tRNA ribosyltransferase-isomerase">
    <location>
        <begin position="1"/>
        <end position="360"/>
    </location>
</feature>
<evidence type="ECO:0000255" key="1">
    <source>
        <dbReference type="HAMAP-Rule" id="MF_00113"/>
    </source>
</evidence>
<evidence type="ECO:0000305" key="2"/>
<accession>Q3JNW2</accession>
<comment type="function">
    <text evidence="1">Transfers and isomerizes the ribose moiety from AdoMet to the 7-aminomethyl group of 7-deazaguanine (preQ1-tRNA) to give epoxyqueuosine (oQ-tRNA).</text>
</comment>
<comment type="catalytic activity">
    <reaction evidence="1">
        <text>7-aminomethyl-7-carbaguanosine(34) in tRNA + S-adenosyl-L-methionine = epoxyqueuosine(34) in tRNA + adenine + L-methionine + 2 H(+)</text>
        <dbReference type="Rhea" id="RHEA:32155"/>
        <dbReference type="Rhea" id="RHEA-COMP:10342"/>
        <dbReference type="Rhea" id="RHEA-COMP:18582"/>
        <dbReference type="ChEBI" id="CHEBI:15378"/>
        <dbReference type="ChEBI" id="CHEBI:16708"/>
        <dbReference type="ChEBI" id="CHEBI:57844"/>
        <dbReference type="ChEBI" id="CHEBI:59789"/>
        <dbReference type="ChEBI" id="CHEBI:82833"/>
        <dbReference type="ChEBI" id="CHEBI:194443"/>
        <dbReference type="EC" id="2.4.99.17"/>
    </reaction>
</comment>
<comment type="pathway">
    <text evidence="1">tRNA modification; tRNA-queuosine biosynthesis.</text>
</comment>
<comment type="subunit">
    <text evidence="1">Monomer.</text>
</comment>
<comment type="subcellular location">
    <subcellularLocation>
        <location evidence="1">Cytoplasm</location>
    </subcellularLocation>
</comment>
<comment type="similarity">
    <text evidence="1">Belongs to the QueA family.</text>
</comment>
<comment type="sequence caution" evidence="2">
    <conflict type="erroneous initiation">
        <sequence resource="EMBL-CDS" id="ABA49758"/>
    </conflict>
</comment>
<keyword id="KW-0963">Cytoplasm</keyword>
<keyword id="KW-0671">Queuosine biosynthesis</keyword>
<keyword id="KW-0949">S-adenosyl-L-methionine</keyword>
<keyword id="KW-0808">Transferase</keyword>